<evidence type="ECO:0000255" key="1">
    <source>
        <dbReference type="HAMAP-Rule" id="MF_04004"/>
    </source>
</evidence>
<proteinExistence type="inferred from homology"/>
<keyword id="KW-0010">Activator</keyword>
<keyword id="KW-0238">DNA-binding</keyword>
<keyword id="KW-0244">Early protein</keyword>
<keyword id="KW-1078">G1/S host cell cycle checkpoint dysregulation by virus</keyword>
<keyword id="KW-1035">Host cytoplasm</keyword>
<keyword id="KW-1048">Host nucleus</keyword>
<keyword id="KW-0945">Host-virus interaction</keyword>
<keyword id="KW-1090">Inhibition of host innate immune response by virus</keyword>
<keyword id="KW-1114">Inhibition of host interferon signaling pathway by virus</keyword>
<keyword id="KW-0922">Interferon antiviral system evasion</keyword>
<keyword id="KW-0479">Metal-binding</keyword>
<keyword id="KW-1121">Modulation of host cell cycle by virus</keyword>
<keyword id="KW-0553">Oncogene</keyword>
<keyword id="KW-1185">Reference proteome</keyword>
<keyword id="KW-0804">Transcription</keyword>
<keyword id="KW-0805">Transcription regulation</keyword>
<keyword id="KW-0899">Viral immunoevasion</keyword>
<keyword id="KW-0862">Zinc</keyword>
<keyword id="KW-0863">Zinc-finger</keyword>
<accession>P50785</accession>
<organism>
    <name type="scientific">Human papillomavirus type 70</name>
    <dbReference type="NCBI Taxonomy" id="39457"/>
    <lineage>
        <taxon>Viruses</taxon>
        <taxon>Monodnaviria</taxon>
        <taxon>Shotokuvirae</taxon>
        <taxon>Cossaviricota</taxon>
        <taxon>Papovaviricetes</taxon>
        <taxon>Zurhausenvirales</taxon>
        <taxon>Papillomaviridae</taxon>
        <taxon>Firstpapillomavirinae</taxon>
        <taxon>Alphapapillomavirus</taxon>
        <taxon>Alphapapillomavirus 7</taxon>
    </lineage>
</organism>
<dbReference type="EMBL" id="U21941">
    <property type="protein sequence ID" value="AAC54851.1"/>
    <property type="molecule type" value="Genomic_DNA"/>
</dbReference>
<dbReference type="EMBL" id="U22461">
    <property type="protein sequence ID" value="AAC54881.1"/>
    <property type="molecule type" value="Genomic_DNA"/>
</dbReference>
<dbReference type="SMR" id="P50785"/>
<dbReference type="Proteomes" id="UP000007677">
    <property type="component" value="Segment"/>
</dbReference>
<dbReference type="GO" id="GO:0030430">
    <property type="term" value="C:host cell cytoplasm"/>
    <property type="evidence" value="ECO:0007669"/>
    <property type="project" value="UniProtKB-SubCell"/>
</dbReference>
<dbReference type="GO" id="GO:0042025">
    <property type="term" value="C:host cell nucleus"/>
    <property type="evidence" value="ECO:0007669"/>
    <property type="project" value="UniProtKB-SubCell"/>
</dbReference>
<dbReference type="GO" id="GO:0003677">
    <property type="term" value="F:DNA binding"/>
    <property type="evidence" value="ECO:0007669"/>
    <property type="project" value="UniProtKB-UniRule"/>
</dbReference>
<dbReference type="GO" id="GO:0003700">
    <property type="term" value="F:DNA-binding transcription factor activity"/>
    <property type="evidence" value="ECO:0007669"/>
    <property type="project" value="UniProtKB-UniRule"/>
</dbReference>
<dbReference type="GO" id="GO:0019904">
    <property type="term" value="F:protein domain specific binding"/>
    <property type="evidence" value="ECO:0007669"/>
    <property type="project" value="UniProtKB-UniRule"/>
</dbReference>
<dbReference type="GO" id="GO:0008270">
    <property type="term" value="F:zinc ion binding"/>
    <property type="evidence" value="ECO:0007669"/>
    <property type="project" value="UniProtKB-KW"/>
</dbReference>
<dbReference type="GO" id="GO:0006351">
    <property type="term" value="P:DNA-templated transcription"/>
    <property type="evidence" value="ECO:0007669"/>
    <property type="project" value="UniProtKB-UniRule"/>
</dbReference>
<dbReference type="GO" id="GO:0039645">
    <property type="term" value="P:symbiont-mediated perturbation of host cell cycle G1/S transition checkpoint"/>
    <property type="evidence" value="ECO:0007669"/>
    <property type="project" value="UniProtKB-UniRule"/>
</dbReference>
<dbReference type="GO" id="GO:0052170">
    <property type="term" value="P:symbiont-mediated suppression of host innate immune response"/>
    <property type="evidence" value="ECO:0007669"/>
    <property type="project" value="UniProtKB-KW"/>
</dbReference>
<dbReference type="GO" id="GO:0039502">
    <property type="term" value="P:symbiont-mediated suppression of host type I interferon-mediated signaling pathway"/>
    <property type="evidence" value="ECO:0007669"/>
    <property type="project" value="UniProtKB-UniRule"/>
</dbReference>
<dbReference type="Gene3D" id="3.30.160.330">
    <property type="match status" value="1"/>
</dbReference>
<dbReference type="HAMAP" id="MF_04004">
    <property type="entry name" value="PPV_E7"/>
    <property type="match status" value="1"/>
</dbReference>
<dbReference type="InterPro" id="IPR000148">
    <property type="entry name" value="Papilloma_E7"/>
</dbReference>
<dbReference type="Pfam" id="PF00527">
    <property type="entry name" value="E7"/>
    <property type="match status" value="1"/>
</dbReference>
<dbReference type="PIRSF" id="PIRSF003407">
    <property type="entry name" value="Papvi_E7"/>
    <property type="match status" value="1"/>
</dbReference>
<dbReference type="SUPFAM" id="SSF161234">
    <property type="entry name" value="E7 C-terminal domain-like"/>
    <property type="match status" value="1"/>
</dbReference>
<name>VE7_HPV70</name>
<feature type="chain" id="PRO_0000133462" description="Protein E7">
    <location>
        <begin position="1"/>
        <end position="109"/>
    </location>
</feature>
<feature type="zinc finger region" evidence="1">
    <location>
        <begin position="68"/>
        <end position="104"/>
    </location>
</feature>
<feature type="region of interest" description="E7 terminal domain" evidence="1">
    <location>
        <begin position="1"/>
        <end position="47"/>
    </location>
</feature>
<feature type="short sequence motif" description="LXCXE motif; interaction with host RB1 and TMEM173/STING" evidence="1">
    <location>
        <begin position="26"/>
        <end position="30"/>
    </location>
</feature>
<feature type="short sequence motif" description="Nuclear export signal" evidence="1">
    <location>
        <begin position="86"/>
        <end position="94"/>
    </location>
</feature>
<reference key="1">
    <citation type="journal article" date="1996" name="J. Clin. Microbiol.">
        <title>Human papillomavirus type 70 genome cloned from overlapping PCR products: complete nucleotide sequence and genomic organization.</title>
        <authorList>
            <person name="Forslund O."/>
            <person name="Hansson B.G."/>
        </authorList>
    </citation>
    <scope>NUCLEOTIDE SEQUENCE [GENOMIC DNA]</scope>
</reference>
<reference key="2">
    <citation type="journal article" date="1996" name="J. Clin. Microbiol.">
        <title>Two novel genital human papillomavirus (HPV) types, HPV68 and HPV70, related to the potentially oncogenic HPV39.</title>
        <authorList>
            <person name="Longuet M."/>
            <person name="Beaudenon S."/>
            <person name="Orth G."/>
        </authorList>
    </citation>
    <scope>NUCLEOTIDE SEQUENCE [GENOMIC DNA]</scope>
</reference>
<reference key="3">
    <citation type="journal article" date="2002" name="Rev. Med. Virol.">
        <title>Interactions of SV40 large T antigen and other viral proteins with retinoblastoma tumour suppressor.</title>
        <authorList>
            <person name="Lee C."/>
            <person name="Cho Y."/>
        </authorList>
    </citation>
    <scope>REVIEW</scope>
</reference>
<comment type="function">
    <text evidence="1">Plays a role in viral genome replication by driving entry of quiescent cells into the cell cycle. Stimulation of progression from G1 to S phase allows the virus to efficiently use the cellular DNA replicating machinery to achieve viral genome replication. E7 protein has both transforming and trans-activating activities. Induces the disassembly of the E2F1 transcription factor from RB1, with subsequent transcriptional activation of E2F1-regulated S-phase genes. Interferes with host histone deacetylation mediated by HDAC1 and HDAC2, leading to transcription activation. Also plays a role in the inhibition of both antiviral and antiproliferative functions of host interferon alpha. Interaction with host TMEM173/STING impairs the ability of TMEM173/STING to sense cytosolic DNA and promote the production of type I interferon (IFN-alpha and IFN-beta).</text>
</comment>
<comment type="subunit">
    <text evidence="1">Homodimer. Homooligomer. Interacts with host RB1; this interaction induces dissociation of RB1-E2F1 complex thereby disrupting RB1 activity. Interacts with host EP300; this interaction represses EP300 transcriptional activity. Interacts with protein E2; this interaction inhibits E7 oncogenic activity. Interacts with host TMEM173/STING; this interaction impairs the ability of TMEM173/STING to sense cytosolic DNA and promote the production of type I interferon (IFN-alpha and IFN-beta).</text>
</comment>
<comment type="subcellular location">
    <subcellularLocation>
        <location evidence="1">Host cytoplasm</location>
    </subcellularLocation>
    <subcellularLocation>
        <location evidence="1">Host nucleus</location>
    </subcellularLocation>
    <text evidence="1">Predominantly found in the host nucleus.</text>
</comment>
<comment type="domain">
    <text evidence="1">The E7 terminal domain is an intrinsically disordered domain, whose flexibility and conformational transitions confer target adaptability to the oncoprotein. It allows adaptation to a variety of protein targets and exposes the PEST degradation sequence that regulates its turnover in the cell.</text>
</comment>
<comment type="PTM">
    <text evidence="1">Highly phosphorylated.</text>
</comment>
<comment type="similarity">
    <text evidence="1">Belongs to the papillomaviridae E7 protein family.</text>
</comment>
<protein>
    <recommendedName>
        <fullName evidence="1">Protein E7</fullName>
    </recommendedName>
</protein>
<gene>
    <name evidence="1" type="primary">E7</name>
</gene>
<organismHost>
    <name type="scientific">Homo sapiens</name>
    <name type="common">Human</name>
    <dbReference type="NCBI Taxonomy" id="9606"/>
</organismHost>
<sequence length="109" mass="12657">MHGPRPTLQEIVLDLYPYNEIQPVDLVCHEQLEDSDNETDEPDHVVNHQQQLLARREEPQRHKIQCMCCKCNTTLHLVVEASQENLRSLLQLFMETLSFVCPWCASGTQ</sequence>